<dbReference type="EC" id="1.7.99.1" evidence="1"/>
<dbReference type="EMBL" id="CP000441">
    <property type="protein sequence ID" value="ABI89643.1"/>
    <property type="molecule type" value="Genomic_DNA"/>
</dbReference>
<dbReference type="RefSeq" id="WP_011659085.1">
    <property type="nucleotide sequence ID" value="NC_008391.1"/>
</dbReference>
<dbReference type="SMR" id="Q0B880"/>
<dbReference type="GeneID" id="93087062"/>
<dbReference type="KEGG" id="bam:Bamb_4090"/>
<dbReference type="PATRIC" id="fig|339670.21.peg.4379"/>
<dbReference type="eggNOG" id="COG1151">
    <property type="taxonomic scope" value="Bacteria"/>
</dbReference>
<dbReference type="Proteomes" id="UP000000662">
    <property type="component" value="Chromosome 2"/>
</dbReference>
<dbReference type="GO" id="GO:0005737">
    <property type="term" value="C:cytoplasm"/>
    <property type="evidence" value="ECO:0007669"/>
    <property type="project" value="UniProtKB-SubCell"/>
</dbReference>
<dbReference type="GO" id="GO:0051539">
    <property type="term" value="F:4 iron, 4 sulfur cluster binding"/>
    <property type="evidence" value="ECO:0007669"/>
    <property type="project" value="UniProtKB-KW"/>
</dbReference>
<dbReference type="GO" id="GO:0050418">
    <property type="term" value="F:hydroxylamine reductase activity"/>
    <property type="evidence" value="ECO:0007669"/>
    <property type="project" value="UniProtKB-UniRule"/>
</dbReference>
<dbReference type="GO" id="GO:0046872">
    <property type="term" value="F:metal ion binding"/>
    <property type="evidence" value="ECO:0007669"/>
    <property type="project" value="UniProtKB-KW"/>
</dbReference>
<dbReference type="GO" id="GO:0004601">
    <property type="term" value="F:peroxidase activity"/>
    <property type="evidence" value="ECO:0007669"/>
    <property type="project" value="TreeGrafter"/>
</dbReference>
<dbReference type="GO" id="GO:0042542">
    <property type="term" value="P:response to hydrogen peroxide"/>
    <property type="evidence" value="ECO:0007669"/>
    <property type="project" value="TreeGrafter"/>
</dbReference>
<dbReference type="CDD" id="cd01914">
    <property type="entry name" value="HCP"/>
    <property type="match status" value="1"/>
</dbReference>
<dbReference type="FunFam" id="1.20.1270.20:FF:000001">
    <property type="entry name" value="Hydroxylamine reductase"/>
    <property type="match status" value="1"/>
</dbReference>
<dbReference type="FunFam" id="3.40.50.2030:FF:000001">
    <property type="entry name" value="Hydroxylamine reductase"/>
    <property type="match status" value="1"/>
</dbReference>
<dbReference type="FunFam" id="3.40.50.2030:FF:000002">
    <property type="entry name" value="Hydroxylamine reductase"/>
    <property type="match status" value="1"/>
</dbReference>
<dbReference type="Gene3D" id="1.20.1270.20">
    <property type="match status" value="2"/>
</dbReference>
<dbReference type="Gene3D" id="3.40.50.2030">
    <property type="match status" value="2"/>
</dbReference>
<dbReference type="HAMAP" id="MF_00069">
    <property type="entry name" value="Hydroxylam_reduct"/>
    <property type="match status" value="1"/>
</dbReference>
<dbReference type="InterPro" id="IPR004137">
    <property type="entry name" value="HCP/CODH"/>
</dbReference>
<dbReference type="InterPro" id="IPR010048">
    <property type="entry name" value="Hydroxylam_reduct"/>
</dbReference>
<dbReference type="InterPro" id="IPR016099">
    <property type="entry name" value="Prismane-like_a/b-sand"/>
</dbReference>
<dbReference type="InterPro" id="IPR011254">
    <property type="entry name" value="Prismane-like_sf"/>
</dbReference>
<dbReference type="InterPro" id="IPR016100">
    <property type="entry name" value="Prismane_a-bundle"/>
</dbReference>
<dbReference type="NCBIfam" id="TIGR01703">
    <property type="entry name" value="hybrid_clust"/>
    <property type="match status" value="1"/>
</dbReference>
<dbReference type="NCBIfam" id="NF003658">
    <property type="entry name" value="PRK05290.1"/>
    <property type="match status" value="1"/>
</dbReference>
<dbReference type="PANTHER" id="PTHR30109">
    <property type="entry name" value="HYDROXYLAMINE REDUCTASE"/>
    <property type="match status" value="1"/>
</dbReference>
<dbReference type="PANTHER" id="PTHR30109:SF0">
    <property type="entry name" value="HYDROXYLAMINE REDUCTASE"/>
    <property type="match status" value="1"/>
</dbReference>
<dbReference type="Pfam" id="PF03063">
    <property type="entry name" value="Prismane"/>
    <property type="match status" value="1"/>
</dbReference>
<dbReference type="PIRSF" id="PIRSF000076">
    <property type="entry name" value="HCP"/>
    <property type="match status" value="1"/>
</dbReference>
<dbReference type="SUPFAM" id="SSF56821">
    <property type="entry name" value="Prismane protein-like"/>
    <property type="match status" value="1"/>
</dbReference>
<gene>
    <name evidence="1" type="primary">hcp</name>
    <name type="ordered locus">Bamb_4090</name>
</gene>
<reference key="1">
    <citation type="submission" date="2006-08" db="EMBL/GenBank/DDBJ databases">
        <title>Complete sequence of chromosome 2 of Burkholderia cepacia AMMD.</title>
        <authorList>
            <person name="Copeland A."/>
            <person name="Lucas S."/>
            <person name="Lapidus A."/>
            <person name="Barry K."/>
            <person name="Detter J.C."/>
            <person name="Glavina del Rio T."/>
            <person name="Hammon N."/>
            <person name="Israni S."/>
            <person name="Pitluck S."/>
            <person name="Bruce D."/>
            <person name="Chain P."/>
            <person name="Malfatti S."/>
            <person name="Shin M."/>
            <person name="Vergez L."/>
            <person name="Schmutz J."/>
            <person name="Larimer F."/>
            <person name="Land M."/>
            <person name="Hauser L."/>
            <person name="Kyrpides N."/>
            <person name="Kim E."/>
            <person name="Parke J."/>
            <person name="Coenye T."/>
            <person name="Konstantinidis K."/>
            <person name="Ramette A."/>
            <person name="Tiedje J."/>
            <person name="Richardson P."/>
        </authorList>
    </citation>
    <scope>NUCLEOTIDE SEQUENCE [LARGE SCALE GENOMIC DNA]</scope>
    <source>
        <strain>ATCC BAA-244 / DSM 16087 / CCUG 44356 / LMG 19182 / AMMD</strain>
    </source>
</reference>
<protein>
    <recommendedName>
        <fullName evidence="1">Hydroxylamine reductase</fullName>
        <ecNumber evidence="1">1.7.99.1</ecNumber>
    </recommendedName>
    <alternativeName>
        <fullName evidence="1">Hybrid-cluster protein</fullName>
        <shortName evidence="1">HCP</shortName>
    </alternativeName>
    <alternativeName>
        <fullName evidence="1">Prismane protein</fullName>
    </alternativeName>
</protein>
<sequence length="555" mass="58896">MFCYQCEQTDRTGARPGCASAKGNCGKDSTTADLQDLLVHAVKGIAQYGAIARTMGVPDREAERFVLYAMFTTLTNVNFHAARFVALLREAAQTRDRVKAACEAHARAAGTAVPVLHGPAEWQPADDLAGLLKQAASVGIDAGLDTVGADIVGLRALVLYGLKGVCAYAHHAQVLGYERDDIYEGVDAALAFLAGNPADVDALLAHALDLGRLNLTVMELLDNANTGRFGVQQPSAVRVSPVAGKAILVSGHDLGDLHALLEQTAGTGIQVYTHGEMLPAHAYPSLKAFPHLAGNYGGAWQDQQSDFARFPGPILMTSNCIIEPLPQYRQRIFTTGPVGWPGVRHLEHHDFPTLIRAAQALPGFQATAPEQTITVGFGRHAVLGVADKVIDAVKAGQIRHFFLIGGCDGAAPGRNYYTEFAEQAPDDTVVMTLGCNKYRFNRHAFGDIGGIPRLLDIGQCNDSYSAIRIATALADAFECGVNDLPLSLVISWFEQKAAAVLLTLLALGIRNIRLGPTLPAFVTPGVLAVLVDQFGIQPIGDAGADLAAALARRAA</sequence>
<name>HCP_BURCM</name>
<comment type="function">
    <text evidence="1">Catalyzes the reduction of hydroxylamine to form NH(3) and H(2)O.</text>
</comment>
<comment type="catalytic activity">
    <reaction evidence="1">
        <text>A + NH4(+) + H2O = hydroxylamine + AH2 + H(+)</text>
        <dbReference type="Rhea" id="RHEA:22052"/>
        <dbReference type="ChEBI" id="CHEBI:13193"/>
        <dbReference type="ChEBI" id="CHEBI:15377"/>
        <dbReference type="ChEBI" id="CHEBI:15378"/>
        <dbReference type="ChEBI" id="CHEBI:15429"/>
        <dbReference type="ChEBI" id="CHEBI:17499"/>
        <dbReference type="ChEBI" id="CHEBI:28938"/>
        <dbReference type="EC" id="1.7.99.1"/>
    </reaction>
</comment>
<comment type="cofactor">
    <cofactor evidence="1">
        <name>[4Fe-4S] cluster</name>
        <dbReference type="ChEBI" id="CHEBI:49883"/>
    </cofactor>
    <text evidence="1">Binds 1 [4Fe-4S] cluster.</text>
</comment>
<comment type="cofactor">
    <cofactor evidence="1">
        <name>hybrid [4Fe-2O-2S] cluster</name>
        <dbReference type="ChEBI" id="CHEBI:60519"/>
    </cofactor>
    <text evidence="1">Binds 1 hybrid [4Fe-2O-2S] cluster.</text>
</comment>
<comment type="subcellular location">
    <subcellularLocation>
        <location evidence="1">Cytoplasm</location>
    </subcellularLocation>
</comment>
<comment type="similarity">
    <text evidence="1">Belongs to the HCP family.</text>
</comment>
<accession>Q0B880</accession>
<keyword id="KW-0004">4Fe-4S</keyword>
<keyword id="KW-0963">Cytoplasm</keyword>
<keyword id="KW-0408">Iron</keyword>
<keyword id="KW-0411">Iron-sulfur</keyword>
<keyword id="KW-0479">Metal-binding</keyword>
<keyword id="KW-0560">Oxidoreductase</keyword>
<evidence type="ECO:0000255" key="1">
    <source>
        <dbReference type="HAMAP-Rule" id="MF_00069"/>
    </source>
</evidence>
<organism>
    <name type="scientific">Burkholderia ambifaria (strain ATCC BAA-244 / DSM 16087 / CCUG 44356 / LMG 19182 / AMMD)</name>
    <name type="common">Burkholderia cepacia (strain AMMD)</name>
    <dbReference type="NCBI Taxonomy" id="339670"/>
    <lineage>
        <taxon>Bacteria</taxon>
        <taxon>Pseudomonadati</taxon>
        <taxon>Pseudomonadota</taxon>
        <taxon>Betaproteobacteria</taxon>
        <taxon>Burkholderiales</taxon>
        <taxon>Burkholderiaceae</taxon>
        <taxon>Burkholderia</taxon>
        <taxon>Burkholderia cepacia complex</taxon>
    </lineage>
</organism>
<feature type="chain" id="PRO_1000009145" description="Hydroxylamine reductase">
    <location>
        <begin position="1"/>
        <end position="555"/>
    </location>
</feature>
<feature type="binding site" evidence="1">
    <location>
        <position position="3"/>
    </location>
    <ligand>
        <name>[4Fe-4S] cluster</name>
        <dbReference type="ChEBI" id="CHEBI:49883"/>
    </ligand>
</feature>
<feature type="binding site" evidence="1">
    <location>
        <position position="6"/>
    </location>
    <ligand>
        <name>[4Fe-4S] cluster</name>
        <dbReference type="ChEBI" id="CHEBI:49883"/>
    </ligand>
</feature>
<feature type="binding site" evidence="1">
    <location>
        <position position="18"/>
    </location>
    <ligand>
        <name>[4Fe-4S] cluster</name>
        <dbReference type="ChEBI" id="CHEBI:49883"/>
    </ligand>
</feature>
<feature type="binding site" evidence="1">
    <location>
        <position position="25"/>
    </location>
    <ligand>
        <name>[4Fe-4S] cluster</name>
        <dbReference type="ChEBI" id="CHEBI:49883"/>
    </ligand>
</feature>
<feature type="binding site" evidence="1">
    <location>
        <position position="252"/>
    </location>
    <ligand>
        <name>hybrid [4Fe-2O-2S] cluster</name>
        <dbReference type="ChEBI" id="CHEBI:60519"/>
    </ligand>
</feature>
<feature type="binding site" evidence="1">
    <location>
        <position position="276"/>
    </location>
    <ligand>
        <name>hybrid [4Fe-2O-2S] cluster</name>
        <dbReference type="ChEBI" id="CHEBI:60519"/>
    </ligand>
</feature>
<feature type="binding site" evidence="1">
    <location>
        <position position="320"/>
    </location>
    <ligand>
        <name>hybrid [4Fe-2O-2S] cluster</name>
        <dbReference type="ChEBI" id="CHEBI:60519"/>
    </ligand>
</feature>
<feature type="binding site" description="via persulfide group" evidence="1">
    <location>
        <position position="407"/>
    </location>
    <ligand>
        <name>hybrid [4Fe-2O-2S] cluster</name>
        <dbReference type="ChEBI" id="CHEBI:60519"/>
    </ligand>
</feature>
<feature type="binding site" evidence="1">
    <location>
        <position position="435"/>
    </location>
    <ligand>
        <name>hybrid [4Fe-2O-2S] cluster</name>
        <dbReference type="ChEBI" id="CHEBI:60519"/>
    </ligand>
</feature>
<feature type="binding site" evidence="1">
    <location>
        <position position="460"/>
    </location>
    <ligand>
        <name>hybrid [4Fe-2O-2S] cluster</name>
        <dbReference type="ChEBI" id="CHEBI:60519"/>
    </ligand>
</feature>
<feature type="binding site" evidence="1">
    <location>
        <position position="494"/>
    </location>
    <ligand>
        <name>hybrid [4Fe-2O-2S] cluster</name>
        <dbReference type="ChEBI" id="CHEBI:60519"/>
    </ligand>
</feature>
<feature type="binding site" evidence="1">
    <location>
        <position position="496"/>
    </location>
    <ligand>
        <name>hybrid [4Fe-2O-2S] cluster</name>
        <dbReference type="ChEBI" id="CHEBI:60519"/>
    </ligand>
</feature>
<feature type="modified residue" description="Cysteine persulfide" evidence="1">
    <location>
        <position position="407"/>
    </location>
</feature>
<proteinExistence type="inferred from homology"/>